<keyword id="KW-0025">Alternative splicing</keyword>
<keyword id="KW-0968">Cytoplasmic vesicle</keyword>
<keyword id="KW-0903">Direct protein sequencing</keyword>
<keyword id="KW-0325">Glycoprotein</keyword>
<keyword id="KW-0472">Membrane</keyword>
<keyword id="KW-0597">Phosphoprotein</keyword>
<keyword id="KW-1185">Reference proteome</keyword>
<keyword id="KW-0677">Repeat</keyword>
<keyword id="KW-0770">Synapse</keyword>
<keyword id="KW-0771">Synaptosome</keyword>
<keyword id="KW-0812">Transmembrane</keyword>
<keyword id="KW-1133">Transmembrane helix</keyword>
<protein>
    <recommendedName>
        <fullName>Synaptoporin</fullName>
    </recommendedName>
</protein>
<reference key="1">
    <citation type="journal article" date="2005" name="Science">
        <title>The transcriptional landscape of the mammalian genome.</title>
        <authorList>
            <person name="Carninci P."/>
            <person name="Kasukawa T."/>
            <person name="Katayama S."/>
            <person name="Gough J."/>
            <person name="Frith M.C."/>
            <person name="Maeda N."/>
            <person name="Oyama R."/>
            <person name="Ravasi T."/>
            <person name="Lenhard B."/>
            <person name="Wells C."/>
            <person name="Kodzius R."/>
            <person name="Shimokawa K."/>
            <person name="Bajic V.B."/>
            <person name="Brenner S.E."/>
            <person name="Batalov S."/>
            <person name="Forrest A.R."/>
            <person name="Zavolan M."/>
            <person name="Davis M.J."/>
            <person name="Wilming L.G."/>
            <person name="Aidinis V."/>
            <person name="Allen J.E."/>
            <person name="Ambesi-Impiombato A."/>
            <person name="Apweiler R."/>
            <person name="Aturaliya R.N."/>
            <person name="Bailey T.L."/>
            <person name="Bansal M."/>
            <person name="Baxter L."/>
            <person name="Beisel K.W."/>
            <person name="Bersano T."/>
            <person name="Bono H."/>
            <person name="Chalk A.M."/>
            <person name="Chiu K.P."/>
            <person name="Choudhary V."/>
            <person name="Christoffels A."/>
            <person name="Clutterbuck D.R."/>
            <person name="Crowe M.L."/>
            <person name="Dalla E."/>
            <person name="Dalrymple B.P."/>
            <person name="de Bono B."/>
            <person name="Della Gatta G."/>
            <person name="di Bernardo D."/>
            <person name="Down T."/>
            <person name="Engstrom P."/>
            <person name="Fagiolini M."/>
            <person name="Faulkner G."/>
            <person name="Fletcher C.F."/>
            <person name="Fukushima T."/>
            <person name="Furuno M."/>
            <person name="Futaki S."/>
            <person name="Gariboldi M."/>
            <person name="Georgii-Hemming P."/>
            <person name="Gingeras T.R."/>
            <person name="Gojobori T."/>
            <person name="Green R.E."/>
            <person name="Gustincich S."/>
            <person name="Harbers M."/>
            <person name="Hayashi Y."/>
            <person name="Hensch T.K."/>
            <person name="Hirokawa N."/>
            <person name="Hill D."/>
            <person name="Huminiecki L."/>
            <person name="Iacono M."/>
            <person name="Ikeo K."/>
            <person name="Iwama A."/>
            <person name="Ishikawa T."/>
            <person name="Jakt M."/>
            <person name="Kanapin A."/>
            <person name="Katoh M."/>
            <person name="Kawasawa Y."/>
            <person name="Kelso J."/>
            <person name="Kitamura H."/>
            <person name="Kitano H."/>
            <person name="Kollias G."/>
            <person name="Krishnan S.P."/>
            <person name="Kruger A."/>
            <person name="Kummerfeld S.K."/>
            <person name="Kurochkin I.V."/>
            <person name="Lareau L.F."/>
            <person name="Lazarevic D."/>
            <person name="Lipovich L."/>
            <person name="Liu J."/>
            <person name="Liuni S."/>
            <person name="McWilliam S."/>
            <person name="Madan Babu M."/>
            <person name="Madera M."/>
            <person name="Marchionni L."/>
            <person name="Matsuda H."/>
            <person name="Matsuzawa S."/>
            <person name="Miki H."/>
            <person name="Mignone F."/>
            <person name="Miyake S."/>
            <person name="Morris K."/>
            <person name="Mottagui-Tabar S."/>
            <person name="Mulder N."/>
            <person name="Nakano N."/>
            <person name="Nakauchi H."/>
            <person name="Ng P."/>
            <person name="Nilsson R."/>
            <person name="Nishiguchi S."/>
            <person name="Nishikawa S."/>
            <person name="Nori F."/>
            <person name="Ohara O."/>
            <person name="Okazaki Y."/>
            <person name="Orlando V."/>
            <person name="Pang K.C."/>
            <person name="Pavan W.J."/>
            <person name="Pavesi G."/>
            <person name="Pesole G."/>
            <person name="Petrovsky N."/>
            <person name="Piazza S."/>
            <person name="Reed J."/>
            <person name="Reid J.F."/>
            <person name="Ring B.Z."/>
            <person name="Ringwald M."/>
            <person name="Rost B."/>
            <person name="Ruan Y."/>
            <person name="Salzberg S.L."/>
            <person name="Sandelin A."/>
            <person name="Schneider C."/>
            <person name="Schoenbach C."/>
            <person name="Sekiguchi K."/>
            <person name="Semple C.A."/>
            <person name="Seno S."/>
            <person name="Sessa L."/>
            <person name="Sheng Y."/>
            <person name="Shibata Y."/>
            <person name="Shimada H."/>
            <person name="Shimada K."/>
            <person name="Silva D."/>
            <person name="Sinclair B."/>
            <person name="Sperling S."/>
            <person name="Stupka E."/>
            <person name="Sugiura K."/>
            <person name="Sultana R."/>
            <person name="Takenaka Y."/>
            <person name="Taki K."/>
            <person name="Tammoja K."/>
            <person name="Tan S.L."/>
            <person name="Tang S."/>
            <person name="Taylor M.S."/>
            <person name="Tegner J."/>
            <person name="Teichmann S.A."/>
            <person name="Ueda H.R."/>
            <person name="van Nimwegen E."/>
            <person name="Verardo R."/>
            <person name="Wei C.L."/>
            <person name="Yagi K."/>
            <person name="Yamanishi H."/>
            <person name="Zabarovsky E."/>
            <person name="Zhu S."/>
            <person name="Zimmer A."/>
            <person name="Hide W."/>
            <person name="Bult C."/>
            <person name="Grimmond S.M."/>
            <person name="Teasdale R.D."/>
            <person name="Liu E.T."/>
            <person name="Brusic V."/>
            <person name="Quackenbush J."/>
            <person name="Wahlestedt C."/>
            <person name="Mattick J.S."/>
            <person name="Hume D.A."/>
            <person name="Kai C."/>
            <person name="Sasaki D."/>
            <person name="Tomaru Y."/>
            <person name="Fukuda S."/>
            <person name="Kanamori-Katayama M."/>
            <person name="Suzuki M."/>
            <person name="Aoki J."/>
            <person name="Arakawa T."/>
            <person name="Iida J."/>
            <person name="Imamura K."/>
            <person name="Itoh M."/>
            <person name="Kato T."/>
            <person name="Kawaji H."/>
            <person name="Kawagashira N."/>
            <person name="Kawashima T."/>
            <person name="Kojima M."/>
            <person name="Kondo S."/>
            <person name="Konno H."/>
            <person name="Nakano K."/>
            <person name="Ninomiya N."/>
            <person name="Nishio T."/>
            <person name="Okada M."/>
            <person name="Plessy C."/>
            <person name="Shibata K."/>
            <person name="Shiraki T."/>
            <person name="Suzuki S."/>
            <person name="Tagami M."/>
            <person name="Waki K."/>
            <person name="Watahiki A."/>
            <person name="Okamura-Oho Y."/>
            <person name="Suzuki H."/>
            <person name="Kawai J."/>
            <person name="Hayashizaki Y."/>
        </authorList>
    </citation>
    <scope>NUCLEOTIDE SEQUENCE [LARGE SCALE MRNA] (ISOFORMS 1 AND 2)</scope>
    <source>
        <strain>C57BL/6J</strain>
        <tissue>Cerebellum</tissue>
        <tissue>Olfactory bulb</tissue>
        <tissue>Spinal cord</tissue>
    </source>
</reference>
<reference key="2">
    <citation type="journal article" date="2004" name="Genome Res.">
        <title>The status, quality, and expansion of the NIH full-length cDNA project: the Mammalian Gene Collection (MGC).</title>
        <authorList>
            <consortium name="The MGC Project Team"/>
        </authorList>
    </citation>
    <scope>NUCLEOTIDE SEQUENCE [LARGE SCALE MRNA] (ISOFORM 2)</scope>
    <source>
        <tissue>Eye</tissue>
    </source>
</reference>
<reference key="3">
    <citation type="submission" date="2007-04" db="UniProtKB">
        <authorList>
            <person name="Lubec G."/>
            <person name="Kang S.U."/>
        </authorList>
    </citation>
    <scope>PROTEIN SEQUENCE OF 150-159 AND 210-217</scope>
    <scope>IDENTIFICATION BY MASS SPECTROMETRY</scope>
    <source>
        <strain>C57BL/6J</strain>
        <tissue>Brain</tissue>
    </source>
</reference>
<reference key="4">
    <citation type="journal article" date="2010" name="Cell">
        <title>A tissue-specific atlas of mouse protein phosphorylation and expression.</title>
        <authorList>
            <person name="Huttlin E.L."/>
            <person name="Jedrychowski M.P."/>
            <person name="Elias J.E."/>
            <person name="Goswami T."/>
            <person name="Rad R."/>
            <person name="Beausoleil S.A."/>
            <person name="Villen J."/>
            <person name="Haas W."/>
            <person name="Sowa M.E."/>
            <person name="Gygi S.P."/>
        </authorList>
    </citation>
    <scope>IDENTIFICATION BY MASS SPECTROMETRY [LARGE SCALE ANALYSIS]</scope>
    <source>
        <tissue>Brain</tissue>
    </source>
</reference>
<organism>
    <name type="scientific">Mus musculus</name>
    <name type="common">Mouse</name>
    <dbReference type="NCBI Taxonomy" id="10090"/>
    <lineage>
        <taxon>Eukaryota</taxon>
        <taxon>Metazoa</taxon>
        <taxon>Chordata</taxon>
        <taxon>Craniata</taxon>
        <taxon>Vertebrata</taxon>
        <taxon>Euteleostomi</taxon>
        <taxon>Mammalia</taxon>
        <taxon>Eutheria</taxon>
        <taxon>Euarchontoglires</taxon>
        <taxon>Glires</taxon>
        <taxon>Rodentia</taxon>
        <taxon>Myomorpha</taxon>
        <taxon>Muroidea</taxon>
        <taxon>Muridae</taxon>
        <taxon>Murinae</taxon>
        <taxon>Mus</taxon>
        <taxon>Mus</taxon>
    </lineage>
</organism>
<proteinExistence type="evidence at protein level"/>
<comment type="function">
    <text evidence="1">Intrinsic membrane protein of small synaptic vesicles. Probable vesicular channel protein (By similarity).</text>
</comment>
<comment type="subcellular location">
    <subcellularLocation>
        <location evidence="1">Cytoplasmic vesicle</location>
        <location evidence="1">Secretory vesicle</location>
        <location evidence="1">Synaptic vesicle membrane</location>
        <topology evidence="1">Multi-pass membrane protein</topology>
    </subcellularLocation>
    <subcellularLocation>
        <location evidence="1">Synapse</location>
        <location evidence="1">Synaptosome</location>
    </subcellularLocation>
</comment>
<comment type="alternative products">
    <event type="alternative splicing"/>
    <isoform>
        <id>Q8BGN8-1</id>
        <name>1</name>
        <sequence type="displayed"/>
    </isoform>
    <isoform>
        <id>Q8BGN8-2</id>
        <name>2</name>
        <sequence type="described" ref="VSP_008550"/>
    </isoform>
</comment>
<comment type="similarity">
    <text evidence="8">Belongs to the synaptophysin/synaptobrevin family.</text>
</comment>
<accession>Q8BGN8</accession>
<accession>Q8C5J4</accession>
<accession>Q9DB89</accession>
<sequence>MCMVIFAPLFAMFAFATCGGYSGGLRLSVDCVNKTESNLSIDIAFAYPFRLQQVTFEVPTCEGKEQQKLALVGDSSSSAEFFVTVAVFAFLYSLAATVVYIFFQNKYRENNRGPLIDFIVTVVFSFLWLVGSSAWAKGLSDVKVATDPKEVLLLMSACKQPSNKCMAVHSPVMSSLNTSVVFGFLNFILWAGNIWFVFKETGWHSSGQRYLSDPMEKHSSSYNQGRYNQESYGSSGGYSQQANLGPTSDEFGQQPSGPTSFNNQI</sequence>
<feature type="chain" id="PRO_0000179158" description="Synaptoporin">
    <location>
        <begin position="1"/>
        <end position="265"/>
    </location>
</feature>
<feature type="topological domain" description="Cytoplasmic" evidence="3">
    <location>
        <begin position="1"/>
        <end position="4"/>
    </location>
</feature>
<feature type="transmembrane region" description="Helical" evidence="3">
    <location>
        <begin position="5"/>
        <end position="25"/>
    </location>
</feature>
<feature type="topological domain" description="Vesicular" evidence="3">
    <location>
        <begin position="26"/>
        <end position="81"/>
    </location>
</feature>
<feature type="transmembrane region" description="Helical" evidence="3">
    <location>
        <begin position="82"/>
        <end position="102"/>
    </location>
</feature>
<feature type="topological domain" description="Cytoplasmic" evidence="3">
    <location>
        <begin position="103"/>
        <end position="114"/>
    </location>
</feature>
<feature type="transmembrane region" description="Helical" evidence="3">
    <location>
        <begin position="115"/>
        <end position="135"/>
    </location>
</feature>
<feature type="topological domain" description="Vesicular" evidence="3">
    <location>
        <begin position="136"/>
        <end position="177"/>
    </location>
</feature>
<feature type="transmembrane region" description="Helical" evidence="3">
    <location>
        <begin position="178"/>
        <end position="198"/>
    </location>
</feature>
<feature type="topological domain" description="Cytoplasmic" evidence="3">
    <location>
        <begin position="199"/>
        <end position="265"/>
    </location>
</feature>
<feature type="domain" description="MARVEL" evidence="4">
    <location>
        <begin position="1"/>
        <end position="202"/>
    </location>
</feature>
<feature type="repeat" description="1">
    <location>
        <begin position="210"/>
        <end position="214"/>
    </location>
</feature>
<feature type="repeat" description="2">
    <location>
        <begin position="222"/>
        <end position="226"/>
    </location>
</feature>
<feature type="repeat" description="3">
    <location>
        <begin position="227"/>
        <end position="231"/>
    </location>
</feature>
<feature type="repeat" description="4">
    <location>
        <begin position="232"/>
        <end position="236"/>
    </location>
</feature>
<feature type="repeat" description="5">
    <location>
        <begin position="238"/>
        <end position="242"/>
    </location>
</feature>
<feature type="region of interest" description="5 X approximate repeats">
    <location>
        <begin position="210"/>
        <end position="242"/>
    </location>
</feature>
<feature type="region of interest" description="Disordered" evidence="5">
    <location>
        <begin position="221"/>
        <end position="265"/>
    </location>
</feature>
<feature type="compositionally biased region" description="Polar residues" evidence="5">
    <location>
        <begin position="221"/>
        <end position="230"/>
    </location>
</feature>
<feature type="compositionally biased region" description="Polar residues" evidence="5">
    <location>
        <begin position="240"/>
        <end position="265"/>
    </location>
</feature>
<feature type="modified residue" description="Phosphoserine" evidence="2">
    <location>
        <position position="212"/>
    </location>
</feature>
<feature type="glycosylation site" description="N-linked (GlcNAc...) asparagine" evidence="3">
    <location>
        <position position="33"/>
    </location>
</feature>
<feature type="glycosylation site" description="N-linked (GlcNAc...) asparagine" evidence="3">
    <location>
        <position position="38"/>
    </location>
</feature>
<feature type="splice variant" id="VSP_008550" description="In isoform 2." evidence="6 7">
    <original>MCMVIFAP</original>
    <variation>MDPVSQVASAGTFRALKEPLAFLRALEL</variation>
    <location>
        <begin position="1"/>
        <end position="8"/>
    </location>
</feature>
<feature type="sequence conflict" description="In Ref. 1; BAC37181." evidence="8" ref="1">
    <original>E</original>
    <variation>K</variation>
    <location>
        <position position="230"/>
    </location>
</feature>
<gene>
    <name type="primary">Synpr</name>
</gene>
<evidence type="ECO:0000250" key="1"/>
<evidence type="ECO:0000250" key="2">
    <source>
        <dbReference type="UniProtKB" id="P22831"/>
    </source>
</evidence>
<evidence type="ECO:0000255" key="3"/>
<evidence type="ECO:0000255" key="4">
    <source>
        <dbReference type="PROSITE-ProRule" id="PRU00581"/>
    </source>
</evidence>
<evidence type="ECO:0000256" key="5">
    <source>
        <dbReference type="SAM" id="MobiDB-lite"/>
    </source>
</evidence>
<evidence type="ECO:0000303" key="6">
    <source>
    </source>
</evidence>
<evidence type="ECO:0000303" key="7">
    <source>
    </source>
</evidence>
<evidence type="ECO:0000305" key="8"/>
<dbReference type="EMBL" id="AK005132">
    <property type="protein sequence ID" value="BAB23831.1"/>
    <property type="molecule type" value="mRNA"/>
</dbReference>
<dbReference type="EMBL" id="AK032442">
    <property type="protein sequence ID" value="BAC27871.1"/>
    <property type="molecule type" value="mRNA"/>
</dbReference>
<dbReference type="EMBL" id="AK049661">
    <property type="protein sequence ID" value="BAC33864.1"/>
    <property type="molecule type" value="mRNA"/>
</dbReference>
<dbReference type="EMBL" id="AK078223">
    <property type="protein sequence ID" value="BAC37181.1"/>
    <property type="molecule type" value="mRNA"/>
</dbReference>
<dbReference type="EMBL" id="BC026512">
    <property type="protein sequence ID" value="AAH26512.1"/>
    <property type="molecule type" value="mRNA"/>
</dbReference>
<dbReference type="CCDS" id="CCDS26821.1">
    <molecule id="Q8BGN8-2"/>
</dbReference>
<dbReference type="CCDS" id="CCDS49402.1">
    <molecule id="Q8BGN8-1"/>
</dbReference>
<dbReference type="RefSeq" id="NP_001156504.1">
    <molecule id="Q8BGN8-1"/>
    <property type="nucleotide sequence ID" value="NM_001163032.1"/>
</dbReference>
<dbReference type="RefSeq" id="NP_082328.3">
    <molecule id="Q8BGN8-2"/>
    <property type="nucleotide sequence ID" value="NM_028052.4"/>
</dbReference>
<dbReference type="SMR" id="Q8BGN8"/>
<dbReference type="BioGRID" id="215089">
    <property type="interactions" value="2"/>
</dbReference>
<dbReference type="FunCoup" id="Q8BGN8">
    <property type="interactions" value="100"/>
</dbReference>
<dbReference type="STRING" id="10090.ENSMUSP00000064986"/>
<dbReference type="TCDB" id="9.B.130.1.1">
    <property type="family name" value="the tetraspan vesicle membrane protein (tvp) family"/>
</dbReference>
<dbReference type="GlyCosmos" id="Q8BGN8">
    <property type="glycosylation" value="2 sites, No reported glycans"/>
</dbReference>
<dbReference type="GlyGen" id="Q8BGN8">
    <property type="glycosylation" value="2 sites, 2 N-linked glycans (2 sites)"/>
</dbReference>
<dbReference type="iPTMnet" id="Q8BGN8"/>
<dbReference type="PhosphoSitePlus" id="Q8BGN8"/>
<dbReference type="SwissPalm" id="Q8BGN8"/>
<dbReference type="PaxDb" id="10090-ENSMUSP00000064986"/>
<dbReference type="PeptideAtlas" id="Q8BGN8"/>
<dbReference type="ProteomicsDB" id="254739">
    <molecule id="Q8BGN8-1"/>
</dbReference>
<dbReference type="ProteomicsDB" id="254740">
    <molecule id="Q8BGN8-2"/>
</dbReference>
<dbReference type="Antibodypedia" id="31743">
    <property type="antibodies" value="153 antibodies from 23 providers"/>
</dbReference>
<dbReference type="DNASU" id="72003"/>
<dbReference type="Ensembl" id="ENSMUST00000070323.12">
    <molecule id="Q8BGN8-2"/>
    <property type="protein sequence ID" value="ENSMUSP00000064986.6"/>
    <property type="gene ID" value="ENSMUSG00000056296.18"/>
</dbReference>
<dbReference type="Ensembl" id="ENSMUST00000112656.4">
    <molecule id="Q8BGN8-1"/>
    <property type="protein sequence ID" value="ENSMUSP00000108275.3"/>
    <property type="gene ID" value="ENSMUSG00000056296.18"/>
</dbReference>
<dbReference type="GeneID" id="72003"/>
<dbReference type="KEGG" id="mmu:72003"/>
<dbReference type="UCSC" id="uc007sfy.2">
    <molecule id="Q8BGN8-2"/>
    <property type="organism name" value="mouse"/>
</dbReference>
<dbReference type="UCSC" id="uc007sga.2">
    <molecule id="Q8BGN8-1"/>
    <property type="organism name" value="mouse"/>
</dbReference>
<dbReference type="AGR" id="MGI:1919253"/>
<dbReference type="CTD" id="132204"/>
<dbReference type="MGI" id="MGI:1919253">
    <property type="gene designation" value="Synpr"/>
</dbReference>
<dbReference type="VEuPathDB" id="HostDB:ENSMUSG00000056296"/>
<dbReference type="eggNOG" id="ENOG502QT4W">
    <property type="taxonomic scope" value="Eukaryota"/>
</dbReference>
<dbReference type="GeneTree" id="ENSGT01030000234637"/>
<dbReference type="HOGENOM" id="CLU_064642_0_1_1"/>
<dbReference type="InParanoid" id="Q8BGN8"/>
<dbReference type="OMA" id="ANKCMAV"/>
<dbReference type="OrthoDB" id="69157at9989"/>
<dbReference type="PhylomeDB" id="Q8BGN8"/>
<dbReference type="TreeFam" id="TF315804"/>
<dbReference type="BioGRID-ORCS" id="72003">
    <property type="hits" value="1 hit in 76 CRISPR screens"/>
</dbReference>
<dbReference type="ChiTaRS" id="Synpr">
    <property type="organism name" value="mouse"/>
</dbReference>
<dbReference type="PRO" id="PR:Q8BGN8"/>
<dbReference type="Proteomes" id="UP000000589">
    <property type="component" value="Chromosome 14"/>
</dbReference>
<dbReference type="RNAct" id="Q8BGN8">
    <property type="molecule type" value="protein"/>
</dbReference>
<dbReference type="Bgee" id="ENSMUSG00000056296">
    <property type="expression patterns" value="Expressed in habenula and 136 other cell types or tissues"/>
</dbReference>
<dbReference type="ExpressionAtlas" id="Q8BGN8">
    <property type="expression patterns" value="baseline and differential"/>
</dbReference>
<dbReference type="GO" id="GO:0043005">
    <property type="term" value="C:neuron projection"/>
    <property type="evidence" value="ECO:0007669"/>
    <property type="project" value="UniProtKB-KW"/>
</dbReference>
<dbReference type="GO" id="GO:0030672">
    <property type="term" value="C:synaptic vesicle membrane"/>
    <property type="evidence" value="ECO:0000304"/>
    <property type="project" value="MGI"/>
</dbReference>
<dbReference type="InterPro" id="IPR008253">
    <property type="entry name" value="Marvel"/>
</dbReference>
<dbReference type="InterPro" id="IPR001285">
    <property type="entry name" value="Synaptophysin/porin"/>
</dbReference>
<dbReference type="PANTHER" id="PTHR10306">
    <property type="entry name" value="SYNAPTOPHYSIN"/>
    <property type="match status" value="1"/>
</dbReference>
<dbReference type="PANTHER" id="PTHR10306:SF16">
    <property type="entry name" value="SYNAPTOPORIN"/>
    <property type="match status" value="1"/>
</dbReference>
<dbReference type="Pfam" id="PF01284">
    <property type="entry name" value="MARVEL"/>
    <property type="match status" value="1"/>
</dbReference>
<dbReference type="PRINTS" id="PR00220">
    <property type="entry name" value="SYNAPTOPHYSN"/>
</dbReference>
<dbReference type="PROSITE" id="PS51225">
    <property type="entry name" value="MARVEL"/>
    <property type="match status" value="1"/>
</dbReference>
<dbReference type="PROSITE" id="PS00604">
    <property type="entry name" value="SYNAPTOP"/>
    <property type="match status" value="1"/>
</dbReference>
<name>SYNPR_MOUSE</name>